<gene>
    <name evidence="1" type="primary">ligA</name>
    <name type="ordered locus">Syncc9605_2552</name>
</gene>
<proteinExistence type="inferred from homology"/>
<evidence type="ECO:0000255" key="1">
    <source>
        <dbReference type="HAMAP-Rule" id="MF_01588"/>
    </source>
</evidence>
<evidence type="ECO:0000256" key="2">
    <source>
        <dbReference type="SAM" id="MobiDB-lite"/>
    </source>
</evidence>
<keyword id="KW-0227">DNA damage</keyword>
<keyword id="KW-0234">DNA repair</keyword>
<keyword id="KW-0235">DNA replication</keyword>
<keyword id="KW-0436">Ligase</keyword>
<keyword id="KW-0460">Magnesium</keyword>
<keyword id="KW-0464">Manganese</keyword>
<keyword id="KW-0479">Metal-binding</keyword>
<keyword id="KW-0520">NAD</keyword>
<keyword id="KW-0862">Zinc</keyword>
<accession>Q3AGK2</accession>
<reference key="1">
    <citation type="submission" date="2005-07" db="EMBL/GenBank/DDBJ databases">
        <title>Complete sequence of Synechococcus sp. CC9605.</title>
        <authorList>
            <consortium name="US DOE Joint Genome Institute"/>
            <person name="Copeland A."/>
            <person name="Lucas S."/>
            <person name="Lapidus A."/>
            <person name="Barry K."/>
            <person name="Detter J.C."/>
            <person name="Glavina T."/>
            <person name="Hammon N."/>
            <person name="Israni S."/>
            <person name="Pitluck S."/>
            <person name="Schmutz J."/>
            <person name="Martinez M."/>
            <person name="Larimer F."/>
            <person name="Land M."/>
            <person name="Kyrpides N."/>
            <person name="Ivanova N."/>
            <person name="Richardson P."/>
        </authorList>
    </citation>
    <scope>NUCLEOTIDE SEQUENCE [LARGE SCALE GENOMIC DNA]</scope>
    <source>
        <strain>CC9605</strain>
    </source>
</reference>
<dbReference type="EC" id="6.5.1.2" evidence="1"/>
<dbReference type="EMBL" id="CP000110">
    <property type="protein sequence ID" value="ABB36280.1"/>
    <property type="molecule type" value="Genomic_DNA"/>
</dbReference>
<dbReference type="RefSeq" id="WP_011365475.1">
    <property type="nucleotide sequence ID" value="NC_007516.1"/>
</dbReference>
<dbReference type="SMR" id="Q3AGK2"/>
<dbReference type="STRING" id="110662.Syncc9605_2552"/>
<dbReference type="KEGG" id="syd:Syncc9605_2552"/>
<dbReference type="eggNOG" id="COG0272">
    <property type="taxonomic scope" value="Bacteria"/>
</dbReference>
<dbReference type="HOGENOM" id="CLU_007764_2_1_3"/>
<dbReference type="OrthoDB" id="9759736at2"/>
<dbReference type="GO" id="GO:0005829">
    <property type="term" value="C:cytosol"/>
    <property type="evidence" value="ECO:0007669"/>
    <property type="project" value="TreeGrafter"/>
</dbReference>
<dbReference type="GO" id="GO:0003911">
    <property type="term" value="F:DNA ligase (NAD+) activity"/>
    <property type="evidence" value="ECO:0007669"/>
    <property type="project" value="UniProtKB-UniRule"/>
</dbReference>
<dbReference type="GO" id="GO:0046872">
    <property type="term" value="F:metal ion binding"/>
    <property type="evidence" value="ECO:0007669"/>
    <property type="project" value="UniProtKB-KW"/>
</dbReference>
<dbReference type="GO" id="GO:0006281">
    <property type="term" value="P:DNA repair"/>
    <property type="evidence" value="ECO:0007669"/>
    <property type="project" value="UniProtKB-KW"/>
</dbReference>
<dbReference type="GO" id="GO:0006260">
    <property type="term" value="P:DNA replication"/>
    <property type="evidence" value="ECO:0007669"/>
    <property type="project" value="UniProtKB-KW"/>
</dbReference>
<dbReference type="CDD" id="cd17748">
    <property type="entry name" value="BRCT_DNA_ligase_like"/>
    <property type="match status" value="1"/>
</dbReference>
<dbReference type="CDD" id="cd00114">
    <property type="entry name" value="LIGANc"/>
    <property type="match status" value="1"/>
</dbReference>
<dbReference type="FunFam" id="1.10.150.20:FF:000007">
    <property type="entry name" value="DNA ligase"/>
    <property type="match status" value="1"/>
</dbReference>
<dbReference type="FunFam" id="2.40.50.140:FF:000012">
    <property type="entry name" value="DNA ligase"/>
    <property type="match status" value="1"/>
</dbReference>
<dbReference type="FunFam" id="3.30.470.30:FF:000001">
    <property type="entry name" value="DNA ligase"/>
    <property type="match status" value="1"/>
</dbReference>
<dbReference type="Gene3D" id="6.20.10.30">
    <property type="match status" value="1"/>
</dbReference>
<dbReference type="Gene3D" id="1.10.150.20">
    <property type="entry name" value="5' to 3' exonuclease, C-terminal subdomain"/>
    <property type="match status" value="2"/>
</dbReference>
<dbReference type="Gene3D" id="3.40.50.10190">
    <property type="entry name" value="BRCT domain"/>
    <property type="match status" value="1"/>
</dbReference>
<dbReference type="Gene3D" id="3.30.470.30">
    <property type="entry name" value="DNA ligase/mRNA capping enzyme"/>
    <property type="match status" value="1"/>
</dbReference>
<dbReference type="Gene3D" id="1.10.287.610">
    <property type="entry name" value="Helix hairpin bin"/>
    <property type="match status" value="1"/>
</dbReference>
<dbReference type="Gene3D" id="2.40.50.140">
    <property type="entry name" value="Nucleic acid-binding proteins"/>
    <property type="match status" value="1"/>
</dbReference>
<dbReference type="HAMAP" id="MF_01588">
    <property type="entry name" value="DNA_ligase_A"/>
    <property type="match status" value="1"/>
</dbReference>
<dbReference type="InterPro" id="IPR001357">
    <property type="entry name" value="BRCT_dom"/>
</dbReference>
<dbReference type="InterPro" id="IPR036420">
    <property type="entry name" value="BRCT_dom_sf"/>
</dbReference>
<dbReference type="InterPro" id="IPR041663">
    <property type="entry name" value="DisA/LigA_HHH"/>
</dbReference>
<dbReference type="InterPro" id="IPR001679">
    <property type="entry name" value="DNA_ligase"/>
</dbReference>
<dbReference type="InterPro" id="IPR013839">
    <property type="entry name" value="DNAligase_adenylation"/>
</dbReference>
<dbReference type="InterPro" id="IPR013840">
    <property type="entry name" value="DNAligase_N"/>
</dbReference>
<dbReference type="InterPro" id="IPR012340">
    <property type="entry name" value="NA-bd_OB-fold"/>
</dbReference>
<dbReference type="InterPro" id="IPR004150">
    <property type="entry name" value="NAD_DNA_ligase_OB"/>
</dbReference>
<dbReference type="InterPro" id="IPR010994">
    <property type="entry name" value="RuvA_2-like"/>
</dbReference>
<dbReference type="InterPro" id="IPR004149">
    <property type="entry name" value="Znf_DNAligase_C4"/>
</dbReference>
<dbReference type="NCBIfam" id="TIGR00575">
    <property type="entry name" value="dnlj"/>
    <property type="match status" value="1"/>
</dbReference>
<dbReference type="NCBIfam" id="NF005932">
    <property type="entry name" value="PRK07956.1"/>
    <property type="match status" value="1"/>
</dbReference>
<dbReference type="PANTHER" id="PTHR23389">
    <property type="entry name" value="CHROMOSOME TRANSMISSION FIDELITY FACTOR 18"/>
    <property type="match status" value="1"/>
</dbReference>
<dbReference type="PANTHER" id="PTHR23389:SF9">
    <property type="entry name" value="DNA LIGASE"/>
    <property type="match status" value="1"/>
</dbReference>
<dbReference type="Pfam" id="PF00533">
    <property type="entry name" value="BRCT"/>
    <property type="match status" value="1"/>
</dbReference>
<dbReference type="Pfam" id="PF01653">
    <property type="entry name" value="DNA_ligase_aden"/>
    <property type="match status" value="1"/>
</dbReference>
<dbReference type="Pfam" id="PF03120">
    <property type="entry name" value="DNA_ligase_OB"/>
    <property type="match status" value="1"/>
</dbReference>
<dbReference type="Pfam" id="PF03119">
    <property type="entry name" value="DNA_ligase_ZBD"/>
    <property type="match status" value="1"/>
</dbReference>
<dbReference type="Pfam" id="PF12826">
    <property type="entry name" value="HHH_2"/>
    <property type="match status" value="1"/>
</dbReference>
<dbReference type="Pfam" id="PF14520">
    <property type="entry name" value="HHH_5"/>
    <property type="match status" value="1"/>
</dbReference>
<dbReference type="PIRSF" id="PIRSF001604">
    <property type="entry name" value="LigA"/>
    <property type="match status" value="1"/>
</dbReference>
<dbReference type="SMART" id="SM00292">
    <property type="entry name" value="BRCT"/>
    <property type="match status" value="1"/>
</dbReference>
<dbReference type="SMART" id="SM00532">
    <property type="entry name" value="LIGANc"/>
    <property type="match status" value="1"/>
</dbReference>
<dbReference type="SUPFAM" id="SSF52113">
    <property type="entry name" value="BRCT domain"/>
    <property type="match status" value="1"/>
</dbReference>
<dbReference type="SUPFAM" id="SSF56091">
    <property type="entry name" value="DNA ligase/mRNA capping enzyme, catalytic domain"/>
    <property type="match status" value="1"/>
</dbReference>
<dbReference type="SUPFAM" id="SSF50249">
    <property type="entry name" value="Nucleic acid-binding proteins"/>
    <property type="match status" value="1"/>
</dbReference>
<dbReference type="SUPFAM" id="SSF47781">
    <property type="entry name" value="RuvA domain 2-like"/>
    <property type="match status" value="1"/>
</dbReference>
<dbReference type="PROSITE" id="PS50172">
    <property type="entry name" value="BRCT"/>
    <property type="match status" value="1"/>
</dbReference>
<name>DNLJ_SYNSC</name>
<comment type="function">
    <text evidence="1">DNA ligase that catalyzes the formation of phosphodiester linkages between 5'-phosphoryl and 3'-hydroxyl groups in double-stranded DNA using NAD as a coenzyme and as the energy source for the reaction. It is essential for DNA replication and repair of damaged DNA.</text>
</comment>
<comment type="catalytic activity">
    <reaction evidence="1">
        <text>NAD(+) + (deoxyribonucleotide)n-3'-hydroxyl + 5'-phospho-(deoxyribonucleotide)m = (deoxyribonucleotide)n+m + AMP + beta-nicotinamide D-nucleotide.</text>
        <dbReference type="EC" id="6.5.1.2"/>
    </reaction>
</comment>
<comment type="cofactor">
    <cofactor evidence="1">
        <name>Mg(2+)</name>
        <dbReference type="ChEBI" id="CHEBI:18420"/>
    </cofactor>
    <cofactor evidence="1">
        <name>Mn(2+)</name>
        <dbReference type="ChEBI" id="CHEBI:29035"/>
    </cofactor>
</comment>
<comment type="similarity">
    <text evidence="1">Belongs to the NAD-dependent DNA ligase family. LigA subfamily.</text>
</comment>
<protein>
    <recommendedName>
        <fullName evidence="1">DNA ligase</fullName>
        <ecNumber evidence="1">6.5.1.2</ecNumber>
    </recommendedName>
    <alternativeName>
        <fullName evidence="1">Polydeoxyribonucleotide synthase [NAD(+)]</fullName>
    </alternativeName>
</protein>
<organism>
    <name type="scientific">Synechococcus sp. (strain CC9605)</name>
    <dbReference type="NCBI Taxonomy" id="110662"/>
    <lineage>
        <taxon>Bacteria</taxon>
        <taxon>Bacillati</taxon>
        <taxon>Cyanobacteriota</taxon>
        <taxon>Cyanophyceae</taxon>
        <taxon>Synechococcales</taxon>
        <taxon>Synechococcaceae</taxon>
        <taxon>Synechococcus</taxon>
    </lineage>
</organism>
<feature type="chain" id="PRO_0000313480" description="DNA ligase">
    <location>
        <begin position="1"/>
        <end position="680"/>
    </location>
</feature>
<feature type="domain" description="BRCT" evidence="1">
    <location>
        <begin position="602"/>
        <end position="680"/>
    </location>
</feature>
<feature type="region of interest" description="Disordered" evidence="2">
    <location>
        <begin position="47"/>
        <end position="66"/>
    </location>
</feature>
<feature type="active site" description="N6-AMP-lysine intermediate" evidence="1">
    <location>
        <position position="117"/>
    </location>
</feature>
<feature type="binding site" evidence="1">
    <location>
        <begin position="32"/>
        <end position="36"/>
    </location>
    <ligand>
        <name>NAD(+)</name>
        <dbReference type="ChEBI" id="CHEBI:57540"/>
    </ligand>
</feature>
<feature type="binding site" evidence="1">
    <location>
        <begin position="81"/>
        <end position="82"/>
    </location>
    <ligand>
        <name>NAD(+)</name>
        <dbReference type="ChEBI" id="CHEBI:57540"/>
    </ligand>
</feature>
<feature type="binding site" evidence="1">
    <location>
        <position position="115"/>
    </location>
    <ligand>
        <name>NAD(+)</name>
        <dbReference type="ChEBI" id="CHEBI:57540"/>
    </ligand>
</feature>
<feature type="binding site" evidence="1">
    <location>
        <position position="138"/>
    </location>
    <ligand>
        <name>NAD(+)</name>
        <dbReference type="ChEBI" id="CHEBI:57540"/>
    </ligand>
</feature>
<feature type="binding site" evidence="1">
    <location>
        <position position="175"/>
    </location>
    <ligand>
        <name>NAD(+)</name>
        <dbReference type="ChEBI" id="CHEBI:57540"/>
    </ligand>
</feature>
<feature type="binding site" evidence="1">
    <location>
        <position position="291"/>
    </location>
    <ligand>
        <name>NAD(+)</name>
        <dbReference type="ChEBI" id="CHEBI:57540"/>
    </ligand>
</feature>
<feature type="binding site" evidence="1">
    <location>
        <position position="315"/>
    </location>
    <ligand>
        <name>NAD(+)</name>
        <dbReference type="ChEBI" id="CHEBI:57540"/>
    </ligand>
</feature>
<feature type="binding site" evidence="1">
    <location>
        <position position="409"/>
    </location>
    <ligand>
        <name>Zn(2+)</name>
        <dbReference type="ChEBI" id="CHEBI:29105"/>
    </ligand>
</feature>
<feature type="binding site" evidence="1">
    <location>
        <position position="412"/>
    </location>
    <ligand>
        <name>Zn(2+)</name>
        <dbReference type="ChEBI" id="CHEBI:29105"/>
    </ligand>
</feature>
<feature type="binding site" evidence="1">
    <location>
        <position position="427"/>
    </location>
    <ligand>
        <name>Zn(2+)</name>
        <dbReference type="ChEBI" id="CHEBI:29105"/>
    </ligand>
</feature>
<feature type="binding site" evidence="1">
    <location>
        <position position="432"/>
    </location>
    <ligand>
        <name>Zn(2+)</name>
        <dbReference type="ChEBI" id="CHEBI:29105"/>
    </ligand>
</feature>
<sequence length="680" mass="73481">MADPHERAAELRHLLNRAGHAYYVLDAPEMEDTVYDRLYRELLELEQNDPGLQRPDSPTQRVGGAPAEGFTSVEHRVGMLSLDNAFNRDDLRAWHERLLKVLDRPSDSRLPLVGELKIDGNALALSYRNGVLERAATRGDGSRGEEITANVRTISSIPLRLQIENPPEWVEVRGEAFIPDATFAAINAEREQRDEALFANPRNACAGTLRQLDPKVVAARRLDFFAYTLHLPGDAQPPGQWAALEWLNSAGFRVNPNRELCGDLAAIQRFCDHWEQGRHDLPYATDGVVVKLDDLQLQDEAGFTQKAPRWAVALKYPAEEAPTRLLRVGAQVGRTGAITPVAEFEAVPLAGTSVSRATLHNADRIAELDLHLGDTIVVRKAGEIIPEVVRVLPELRPSDATPVQLPQQCPECGSNLVREGDEAATRCVNSSCPAILRGGLRHWVSKGALDVDGLGSKLIEQLVDRGLVGSLADLYRLDAALLASLDRMGDKSATNLVEALKASKQQPWHRQLYGLGIRHIGEVNAKALAAAFFSIDSLATAALEAPEQIAELHGIGPEISASLGQWLHTPANQQLLQDLRSVGFSLEASTSEQEAASQAGADADGVLQGKTLVLTGTLPNLSRSEAKALIETAGGKVSGSVSKKTDYLVAGEAAGSKLTKAESLGVTVLSEADLTALLQP</sequence>